<dbReference type="EMBL" id="BX548175">
    <property type="protein sequence ID" value="CAE20759.1"/>
    <property type="molecule type" value="Genomic_DNA"/>
</dbReference>
<dbReference type="RefSeq" id="WP_011129963.1">
    <property type="nucleotide sequence ID" value="NC_005071.1"/>
</dbReference>
<dbReference type="SMR" id="Q7V7Z4"/>
<dbReference type="KEGG" id="pmt:PMT_0584"/>
<dbReference type="eggNOG" id="COG0052">
    <property type="taxonomic scope" value="Bacteria"/>
</dbReference>
<dbReference type="HOGENOM" id="CLU_040318_1_2_3"/>
<dbReference type="OrthoDB" id="9808036at2"/>
<dbReference type="Proteomes" id="UP000001423">
    <property type="component" value="Chromosome"/>
</dbReference>
<dbReference type="GO" id="GO:0022627">
    <property type="term" value="C:cytosolic small ribosomal subunit"/>
    <property type="evidence" value="ECO:0007669"/>
    <property type="project" value="TreeGrafter"/>
</dbReference>
<dbReference type="GO" id="GO:0003735">
    <property type="term" value="F:structural constituent of ribosome"/>
    <property type="evidence" value="ECO:0007669"/>
    <property type="project" value="InterPro"/>
</dbReference>
<dbReference type="GO" id="GO:0006412">
    <property type="term" value="P:translation"/>
    <property type="evidence" value="ECO:0007669"/>
    <property type="project" value="UniProtKB-UniRule"/>
</dbReference>
<dbReference type="CDD" id="cd01425">
    <property type="entry name" value="RPS2"/>
    <property type="match status" value="1"/>
</dbReference>
<dbReference type="FunFam" id="1.10.287.610:FF:000001">
    <property type="entry name" value="30S ribosomal protein S2"/>
    <property type="match status" value="1"/>
</dbReference>
<dbReference type="Gene3D" id="3.40.50.10490">
    <property type="entry name" value="Glucose-6-phosphate isomerase like protein, domain 1"/>
    <property type="match status" value="1"/>
</dbReference>
<dbReference type="Gene3D" id="1.10.287.610">
    <property type="entry name" value="Helix hairpin bin"/>
    <property type="match status" value="1"/>
</dbReference>
<dbReference type="HAMAP" id="MF_00291_B">
    <property type="entry name" value="Ribosomal_uS2_B"/>
    <property type="match status" value="1"/>
</dbReference>
<dbReference type="InterPro" id="IPR001865">
    <property type="entry name" value="Ribosomal_uS2"/>
</dbReference>
<dbReference type="InterPro" id="IPR005706">
    <property type="entry name" value="Ribosomal_uS2_bac/mit/plastid"/>
</dbReference>
<dbReference type="InterPro" id="IPR018130">
    <property type="entry name" value="Ribosomal_uS2_CS"/>
</dbReference>
<dbReference type="InterPro" id="IPR023591">
    <property type="entry name" value="Ribosomal_uS2_flav_dom_sf"/>
</dbReference>
<dbReference type="NCBIfam" id="TIGR01011">
    <property type="entry name" value="rpsB_bact"/>
    <property type="match status" value="1"/>
</dbReference>
<dbReference type="PANTHER" id="PTHR12534">
    <property type="entry name" value="30S RIBOSOMAL PROTEIN S2 PROKARYOTIC AND ORGANELLAR"/>
    <property type="match status" value="1"/>
</dbReference>
<dbReference type="PANTHER" id="PTHR12534:SF0">
    <property type="entry name" value="SMALL RIBOSOMAL SUBUNIT PROTEIN US2M"/>
    <property type="match status" value="1"/>
</dbReference>
<dbReference type="Pfam" id="PF00318">
    <property type="entry name" value="Ribosomal_S2"/>
    <property type="match status" value="1"/>
</dbReference>
<dbReference type="PRINTS" id="PR00395">
    <property type="entry name" value="RIBOSOMALS2"/>
</dbReference>
<dbReference type="SUPFAM" id="SSF52313">
    <property type="entry name" value="Ribosomal protein S2"/>
    <property type="match status" value="1"/>
</dbReference>
<dbReference type="PROSITE" id="PS00962">
    <property type="entry name" value="RIBOSOMAL_S2_1"/>
    <property type="match status" value="1"/>
</dbReference>
<proteinExistence type="inferred from homology"/>
<feature type="chain" id="PRO_0000134218" description="Small ribosomal subunit protein uS2">
    <location>
        <begin position="1"/>
        <end position="239"/>
    </location>
</feature>
<protein>
    <recommendedName>
        <fullName evidence="1">Small ribosomal subunit protein uS2</fullName>
    </recommendedName>
    <alternativeName>
        <fullName evidence="2">30S ribosomal protein S2</fullName>
    </alternativeName>
</protein>
<accession>Q7V7Z4</accession>
<name>RS2_PROMM</name>
<keyword id="KW-1185">Reference proteome</keyword>
<keyword id="KW-0687">Ribonucleoprotein</keyword>
<keyword id="KW-0689">Ribosomal protein</keyword>
<sequence length="239" mass="26924">MAVVTLSEMMEAGAHFGHQTRRWNPKMSRYIYCARNGVHIIDLVQTAICMNNAYKWTRSSARSGKRFLFVGTKKQASEVVALEATRCGASYVNQRWLGGMLTNWTTMKARIDRLKDLERMESSGAIAMRPKKEASVLRRELERLQKYLGGLKGMRRLPDVVVLVDQRRETNAVLEARKLDIPLVSMLDTNCDPDLCEVPIPCNDDAVRSVQLVLGRLADAINEGRHGTNDQRGADDSDD</sequence>
<reference key="1">
    <citation type="journal article" date="2003" name="Nature">
        <title>Genome divergence in two Prochlorococcus ecotypes reflects oceanic niche differentiation.</title>
        <authorList>
            <person name="Rocap G."/>
            <person name="Larimer F.W."/>
            <person name="Lamerdin J.E."/>
            <person name="Malfatti S."/>
            <person name="Chain P."/>
            <person name="Ahlgren N.A."/>
            <person name="Arellano A."/>
            <person name="Coleman M."/>
            <person name="Hauser L."/>
            <person name="Hess W.R."/>
            <person name="Johnson Z.I."/>
            <person name="Land M.L."/>
            <person name="Lindell D."/>
            <person name="Post A.F."/>
            <person name="Regala W."/>
            <person name="Shah M."/>
            <person name="Shaw S.L."/>
            <person name="Steglich C."/>
            <person name="Sullivan M.B."/>
            <person name="Ting C.S."/>
            <person name="Tolonen A."/>
            <person name="Webb E.A."/>
            <person name="Zinser E.R."/>
            <person name="Chisholm S.W."/>
        </authorList>
    </citation>
    <scope>NUCLEOTIDE SEQUENCE [LARGE SCALE GENOMIC DNA]</scope>
    <source>
        <strain>MIT 9313</strain>
    </source>
</reference>
<gene>
    <name evidence="1" type="primary">rpsB</name>
    <name evidence="1" type="synonym">rps2</name>
    <name type="ordered locus">PMT_0584</name>
</gene>
<evidence type="ECO:0000255" key="1">
    <source>
        <dbReference type="HAMAP-Rule" id="MF_00291"/>
    </source>
</evidence>
<evidence type="ECO:0000305" key="2"/>
<organism>
    <name type="scientific">Prochlorococcus marinus (strain MIT 9313)</name>
    <dbReference type="NCBI Taxonomy" id="74547"/>
    <lineage>
        <taxon>Bacteria</taxon>
        <taxon>Bacillati</taxon>
        <taxon>Cyanobacteriota</taxon>
        <taxon>Cyanophyceae</taxon>
        <taxon>Synechococcales</taxon>
        <taxon>Prochlorococcaceae</taxon>
        <taxon>Prochlorococcus</taxon>
    </lineage>
</organism>
<comment type="similarity">
    <text evidence="1">Belongs to the universal ribosomal protein uS2 family.</text>
</comment>